<evidence type="ECO:0000255" key="1">
    <source>
        <dbReference type="HAMAP-Rule" id="MF_01615"/>
    </source>
</evidence>
<evidence type="ECO:0000305" key="2"/>
<sequence length="179" mass="19975">MTQKVGVLAIQGGYQKHADMFKSLGVEVKLVKFNNDFDSIDRLVIPGGESTTLLNLLNKHQIFDKLYNFCSSKPVFGTCAGSIILSKGEGYLNLLDLEVQRNAYGRQVDSFVADISFNDKNITGVFIRAPKFIVVGNQVDILSKYQNSPVLLRQANILVSSFHPELTQDPTIHEYFLAM</sequence>
<protein>
    <recommendedName>
        <fullName evidence="1">Pyridoxal 5'-phosphate synthase subunit PdxT</fullName>
        <ecNumber evidence="1">4.3.3.6</ecNumber>
    </recommendedName>
    <alternativeName>
        <fullName evidence="1">Pdx2</fullName>
    </alternativeName>
    <alternativeName>
        <fullName evidence="1">Pyridoxal 5'-phosphate synthase glutaminase subunit</fullName>
        <ecNumber evidence="1">3.5.1.2</ecNumber>
    </alternativeName>
</protein>
<dbReference type="EC" id="4.3.3.6" evidence="1"/>
<dbReference type="EC" id="3.5.1.2" evidence="1"/>
<dbReference type="EMBL" id="AJ749949">
    <property type="protein sequence ID" value="CAG45145.1"/>
    <property type="status" value="ALT_INIT"/>
    <property type="molecule type" value="Genomic_DNA"/>
</dbReference>
<dbReference type="RefSeq" id="WP_003026851.1">
    <property type="nucleotide sequence ID" value="NZ_CP010290.1"/>
</dbReference>
<dbReference type="RefSeq" id="YP_169547.3">
    <property type="nucleotide sequence ID" value="NC_006570.2"/>
</dbReference>
<dbReference type="SMR" id="Q5NHE5"/>
<dbReference type="STRING" id="177416.FTT_0512"/>
<dbReference type="MEROPS" id="C26.A32"/>
<dbReference type="DNASU" id="3191376"/>
<dbReference type="EnsemblBacteria" id="CAG45145">
    <property type="protein sequence ID" value="CAG45145"/>
    <property type="gene ID" value="FTT_0512"/>
</dbReference>
<dbReference type="KEGG" id="ftu:FTT_0512"/>
<dbReference type="eggNOG" id="COG0311">
    <property type="taxonomic scope" value="Bacteria"/>
</dbReference>
<dbReference type="OrthoDB" id="9810320at2"/>
<dbReference type="UniPathway" id="UPA00245"/>
<dbReference type="Proteomes" id="UP000001174">
    <property type="component" value="Chromosome"/>
</dbReference>
<dbReference type="GO" id="GO:0005829">
    <property type="term" value="C:cytosol"/>
    <property type="evidence" value="ECO:0007669"/>
    <property type="project" value="TreeGrafter"/>
</dbReference>
<dbReference type="GO" id="GO:1903600">
    <property type="term" value="C:glutaminase complex"/>
    <property type="evidence" value="ECO:0007669"/>
    <property type="project" value="TreeGrafter"/>
</dbReference>
<dbReference type="GO" id="GO:0004359">
    <property type="term" value="F:glutaminase activity"/>
    <property type="evidence" value="ECO:0007669"/>
    <property type="project" value="UniProtKB-UniRule"/>
</dbReference>
<dbReference type="GO" id="GO:0036381">
    <property type="term" value="F:pyridoxal 5'-phosphate synthase (glutamine hydrolysing) activity"/>
    <property type="evidence" value="ECO:0007669"/>
    <property type="project" value="UniProtKB-UniRule"/>
</dbReference>
<dbReference type="GO" id="GO:0006543">
    <property type="term" value="P:glutamine catabolic process"/>
    <property type="evidence" value="ECO:0007669"/>
    <property type="project" value="UniProtKB-UniRule"/>
</dbReference>
<dbReference type="GO" id="GO:0042823">
    <property type="term" value="P:pyridoxal phosphate biosynthetic process"/>
    <property type="evidence" value="ECO:0007669"/>
    <property type="project" value="UniProtKB-UniRule"/>
</dbReference>
<dbReference type="GO" id="GO:0008614">
    <property type="term" value="P:pyridoxine metabolic process"/>
    <property type="evidence" value="ECO:0007669"/>
    <property type="project" value="TreeGrafter"/>
</dbReference>
<dbReference type="CDD" id="cd01749">
    <property type="entry name" value="GATase1_PB"/>
    <property type="match status" value="1"/>
</dbReference>
<dbReference type="Gene3D" id="3.40.50.880">
    <property type="match status" value="1"/>
</dbReference>
<dbReference type="HAMAP" id="MF_01615">
    <property type="entry name" value="PdxT"/>
    <property type="match status" value="1"/>
</dbReference>
<dbReference type="InterPro" id="IPR029062">
    <property type="entry name" value="Class_I_gatase-like"/>
</dbReference>
<dbReference type="InterPro" id="IPR002161">
    <property type="entry name" value="PdxT/SNO"/>
</dbReference>
<dbReference type="InterPro" id="IPR021196">
    <property type="entry name" value="PdxT/SNO_CS"/>
</dbReference>
<dbReference type="NCBIfam" id="TIGR03800">
    <property type="entry name" value="PLP_synth_Pdx2"/>
    <property type="match status" value="1"/>
</dbReference>
<dbReference type="NCBIfam" id="NF010050">
    <property type="entry name" value="PRK13526.1"/>
    <property type="match status" value="1"/>
</dbReference>
<dbReference type="PANTHER" id="PTHR31559">
    <property type="entry name" value="PYRIDOXAL 5'-PHOSPHATE SYNTHASE SUBUNIT SNO"/>
    <property type="match status" value="1"/>
</dbReference>
<dbReference type="PANTHER" id="PTHR31559:SF0">
    <property type="entry name" value="PYRIDOXAL 5'-PHOSPHATE SYNTHASE SUBUNIT SNO1-RELATED"/>
    <property type="match status" value="1"/>
</dbReference>
<dbReference type="Pfam" id="PF01174">
    <property type="entry name" value="SNO"/>
    <property type="match status" value="1"/>
</dbReference>
<dbReference type="PIRSF" id="PIRSF005639">
    <property type="entry name" value="Glut_amidoT_SNO"/>
    <property type="match status" value="1"/>
</dbReference>
<dbReference type="SUPFAM" id="SSF52317">
    <property type="entry name" value="Class I glutamine amidotransferase-like"/>
    <property type="match status" value="1"/>
</dbReference>
<dbReference type="PROSITE" id="PS01236">
    <property type="entry name" value="PDXT_SNO_1"/>
    <property type="match status" value="1"/>
</dbReference>
<dbReference type="PROSITE" id="PS51130">
    <property type="entry name" value="PDXT_SNO_2"/>
    <property type="match status" value="1"/>
</dbReference>
<proteinExistence type="inferred from homology"/>
<comment type="function">
    <text evidence="1">Catalyzes the hydrolysis of glutamine to glutamate and ammonia as part of the biosynthesis of pyridoxal 5'-phosphate. The resulting ammonia molecule is channeled to the active site of PdxS.</text>
</comment>
<comment type="catalytic activity">
    <reaction evidence="1">
        <text>aldehydo-D-ribose 5-phosphate + D-glyceraldehyde 3-phosphate + L-glutamine = pyridoxal 5'-phosphate + L-glutamate + phosphate + 3 H2O + H(+)</text>
        <dbReference type="Rhea" id="RHEA:31507"/>
        <dbReference type="ChEBI" id="CHEBI:15377"/>
        <dbReference type="ChEBI" id="CHEBI:15378"/>
        <dbReference type="ChEBI" id="CHEBI:29985"/>
        <dbReference type="ChEBI" id="CHEBI:43474"/>
        <dbReference type="ChEBI" id="CHEBI:58273"/>
        <dbReference type="ChEBI" id="CHEBI:58359"/>
        <dbReference type="ChEBI" id="CHEBI:59776"/>
        <dbReference type="ChEBI" id="CHEBI:597326"/>
        <dbReference type="EC" id="4.3.3.6"/>
    </reaction>
</comment>
<comment type="catalytic activity">
    <reaction evidence="1">
        <text>L-glutamine + H2O = L-glutamate + NH4(+)</text>
        <dbReference type="Rhea" id="RHEA:15889"/>
        <dbReference type="ChEBI" id="CHEBI:15377"/>
        <dbReference type="ChEBI" id="CHEBI:28938"/>
        <dbReference type="ChEBI" id="CHEBI:29985"/>
        <dbReference type="ChEBI" id="CHEBI:58359"/>
        <dbReference type="EC" id="3.5.1.2"/>
    </reaction>
</comment>
<comment type="pathway">
    <text evidence="1">Cofactor biosynthesis; pyridoxal 5'-phosphate biosynthesis.</text>
</comment>
<comment type="subunit">
    <text evidence="1">In the presence of PdxS, forms a dodecamer of heterodimers. Only shows activity in the heterodimer.</text>
</comment>
<comment type="similarity">
    <text evidence="1">Belongs to the glutaminase PdxT/SNO family.</text>
</comment>
<comment type="sequence caution" evidence="2">
    <conflict type="erroneous initiation">
        <sequence resource="EMBL-CDS" id="CAG45145"/>
    </conflict>
</comment>
<feature type="chain" id="PRO_0000135638" description="Pyridoxal 5'-phosphate synthase subunit PdxT">
    <location>
        <begin position="1"/>
        <end position="179"/>
    </location>
</feature>
<feature type="active site" description="Nucleophile" evidence="1">
    <location>
        <position position="79"/>
    </location>
</feature>
<feature type="active site" description="Charge relay system" evidence="1">
    <location>
        <position position="163"/>
    </location>
</feature>
<feature type="active site" description="Charge relay system" evidence="1">
    <location>
        <position position="165"/>
    </location>
</feature>
<feature type="binding site" evidence="1">
    <location>
        <begin position="48"/>
        <end position="50"/>
    </location>
    <ligand>
        <name>L-glutamine</name>
        <dbReference type="ChEBI" id="CHEBI:58359"/>
    </ligand>
</feature>
<feature type="binding site" evidence="1">
    <location>
        <position position="101"/>
    </location>
    <ligand>
        <name>L-glutamine</name>
        <dbReference type="ChEBI" id="CHEBI:58359"/>
    </ligand>
</feature>
<feature type="binding site" evidence="1">
    <location>
        <begin position="127"/>
        <end position="128"/>
    </location>
    <ligand>
        <name>L-glutamine</name>
        <dbReference type="ChEBI" id="CHEBI:58359"/>
    </ligand>
</feature>
<accession>Q5NHE5</accession>
<gene>
    <name evidence="1" type="primary">pdxT</name>
    <name type="ordered locus">FTT_0512</name>
</gene>
<reference key="1">
    <citation type="journal article" date="2005" name="Nat. Genet.">
        <title>The complete genome sequence of Francisella tularensis, the causative agent of tularemia.</title>
        <authorList>
            <person name="Larsson P."/>
            <person name="Oyston P.C.F."/>
            <person name="Chain P."/>
            <person name="Chu M.C."/>
            <person name="Duffield M."/>
            <person name="Fuxelius H.-H."/>
            <person name="Garcia E."/>
            <person name="Haelltorp G."/>
            <person name="Johansson D."/>
            <person name="Isherwood K.E."/>
            <person name="Karp P.D."/>
            <person name="Larsson E."/>
            <person name="Liu Y."/>
            <person name="Michell S."/>
            <person name="Prior J."/>
            <person name="Prior R."/>
            <person name="Malfatti S."/>
            <person name="Sjoestedt A."/>
            <person name="Svensson K."/>
            <person name="Thompson N."/>
            <person name="Vergez L."/>
            <person name="Wagg J.K."/>
            <person name="Wren B.W."/>
            <person name="Lindler L.E."/>
            <person name="Andersson S.G.E."/>
            <person name="Forsman M."/>
            <person name="Titball R.W."/>
        </authorList>
    </citation>
    <scope>NUCLEOTIDE SEQUENCE [LARGE SCALE GENOMIC DNA]</scope>
    <source>
        <strain>SCHU S4 / Schu 4</strain>
    </source>
</reference>
<name>PDXT_FRATT</name>
<keyword id="KW-0315">Glutamine amidotransferase</keyword>
<keyword id="KW-0378">Hydrolase</keyword>
<keyword id="KW-0456">Lyase</keyword>
<keyword id="KW-0663">Pyridoxal phosphate</keyword>
<keyword id="KW-1185">Reference proteome</keyword>
<organism>
    <name type="scientific">Francisella tularensis subsp. tularensis (strain SCHU S4 / Schu 4)</name>
    <dbReference type="NCBI Taxonomy" id="177416"/>
    <lineage>
        <taxon>Bacteria</taxon>
        <taxon>Pseudomonadati</taxon>
        <taxon>Pseudomonadota</taxon>
        <taxon>Gammaproteobacteria</taxon>
        <taxon>Thiotrichales</taxon>
        <taxon>Francisellaceae</taxon>
        <taxon>Francisella</taxon>
    </lineage>
</organism>